<proteinExistence type="inferred from homology"/>
<organism>
    <name type="scientific">Cereibacter sphaeroides (strain ATCC 17023 / DSM 158 / JCM 6121 / CCUG 31486 / LMG 2827 / NBRC 12203 / NCIMB 8253 / ATH 2.4.1.)</name>
    <name type="common">Rhodobacter sphaeroides</name>
    <dbReference type="NCBI Taxonomy" id="272943"/>
    <lineage>
        <taxon>Bacteria</taxon>
        <taxon>Pseudomonadati</taxon>
        <taxon>Pseudomonadota</taxon>
        <taxon>Alphaproteobacteria</taxon>
        <taxon>Rhodobacterales</taxon>
        <taxon>Paracoccaceae</taxon>
        <taxon>Cereibacter</taxon>
    </lineage>
</organism>
<comment type="function">
    <text evidence="1">Responsible for synthesis of pseudouridine from uracil-55 in the psi GC loop of transfer RNAs.</text>
</comment>
<comment type="catalytic activity">
    <reaction evidence="1">
        <text>uridine(55) in tRNA = pseudouridine(55) in tRNA</text>
        <dbReference type="Rhea" id="RHEA:42532"/>
        <dbReference type="Rhea" id="RHEA-COMP:10101"/>
        <dbReference type="Rhea" id="RHEA-COMP:10102"/>
        <dbReference type="ChEBI" id="CHEBI:65314"/>
        <dbReference type="ChEBI" id="CHEBI:65315"/>
        <dbReference type="EC" id="5.4.99.25"/>
    </reaction>
</comment>
<comment type="similarity">
    <text evidence="1">Belongs to the pseudouridine synthase TruB family. Type 1 subfamily.</text>
</comment>
<sequence length="301" mass="32195">MGRTRKGRAISGWLVVDKPAGMTSTAVVNKVRWALEAQKAGHAGTLDPDATGVLAVALGEATKTVPYITDALKCYRFMVRLGLSTRTDDASGEVIATSEARPTDAEIEAALAAFRGEIQQVPPQFSAVKVEGERAYDLARDGERLDLAARPLWVESLEILSRPDADHVELEMVCGKGGYVRSIARDLGEALGCHGHVAWLRRTWSGPFEAEDGISVATIDELARSEALLSHVLPLAKGLADLPELPATPEGAARLRCGNPGMVIASDVEFGEEAWASFQGQPVAVGIYKSGELHPSRVFNL</sequence>
<dbReference type="EC" id="5.4.99.25" evidence="1"/>
<dbReference type="EMBL" id="CP000143">
    <property type="protein sequence ID" value="ABA80293.1"/>
    <property type="molecule type" value="Genomic_DNA"/>
</dbReference>
<dbReference type="RefSeq" id="WP_011338723.1">
    <property type="nucleotide sequence ID" value="NC_007493.2"/>
</dbReference>
<dbReference type="RefSeq" id="YP_354194.1">
    <property type="nucleotide sequence ID" value="NC_007493.2"/>
</dbReference>
<dbReference type="SMR" id="Q3IYU1"/>
<dbReference type="STRING" id="272943.RSP_1108"/>
<dbReference type="EnsemblBacteria" id="ABA80293">
    <property type="protein sequence ID" value="ABA80293"/>
    <property type="gene ID" value="RSP_1108"/>
</dbReference>
<dbReference type="GeneID" id="3720692"/>
<dbReference type="KEGG" id="rsp:RSP_1108"/>
<dbReference type="PATRIC" id="fig|272943.9.peg.3086"/>
<dbReference type="eggNOG" id="COG0130">
    <property type="taxonomic scope" value="Bacteria"/>
</dbReference>
<dbReference type="OrthoDB" id="9802309at2"/>
<dbReference type="PhylomeDB" id="Q3IYU1"/>
<dbReference type="Proteomes" id="UP000002703">
    <property type="component" value="Chromosome 1"/>
</dbReference>
<dbReference type="GO" id="GO:0003723">
    <property type="term" value="F:RNA binding"/>
    <property type="evidence" value="ECO:0007669"/>
    <property type="project" value="InterPro"/>
</dbReference>
<dbReference type="GO" id="GO:0160148">
    <property type="term" value="F:tRNA pseudouridine(55) synthase activity"/>
    <property type="evidence" value="ECO:0007669"/>
    <property type="project" value="UniProtKB-EC"/>
</dbReference>
<dbReference type="GO" id="GO:1990481">
    <property type="term" value="P:mRNA pseudouridine synthesis"/>
    <property type="evidence" value="ECO:0007669"/>
    <property type="project" value="TreeGrafter"/>
</dbReference>
<dbReference type="GO" id="GO:0031119">
    <property type="term" value="P:tRNA pseudouridine synthesis"/>
    <property type="evidence" value="ECO:0007669"/>
    <property type="project" value="UniProtKB-UniRule"/>
</dbReference>
<dbReference type="CDD" id="cd02573">
    <property type="entry name" value="PseudoU_synth_EcTruB"/>
    <property type="match status" value="1"/>
</dbReference>
<dbReference type="Gene3D" id="3.30.2350.10">
    <property type="entry name" value="Pseudouridine synthase"/>
    <property type="match status" value="1"/>
</dbReference>
<dbReference type="HAMAP" id="MF_01080">
    <property type="entry name" value="TruB_bact"/>
    <property type="match status" value="1"/>
</dbReference>
<dbReference type="InterPro" id="IPR020103">
    <property type="entry name" value="PsdUridine_synth_cat_dom_sf"/>
</dbReference>
<dbReference type="InterPro" id="IPR002501">
    <property type="entry name" value="PsdUridine_synth_N"/>
</dbReference>
<dbReference type="InterPro" id="IPR014780">
    <property type="entry name" value="tRNA_psdUridine_synth_TruB"/>
</dbReference>
<dbReference type="InterPro" id="IPR032819">
    <property type="entry name" value="TruB_C"/>
</dbReference>
<dbReference type="NCBIfam" id="TIGR00431">
    <property type="entry name" value="TruB"/>
    <property type="match status" value="1"/>
</dbReference>
<dbReference type="PANTHER" id="PTHR13767:SF2">
    <property type="entry name" value="PSEUDOURIDYLATE SYNTHASE TRUB1"/>
    <property type="match status" value="1"/>
</dbReference>
<dbReference type="PANTHER" id="PTHR13767">
    <property type="entry name" value="TRNA-PSEUDOURIDINE SYNTHASE"/>
    <property type="match status" value="1"/>
</dbReference>
<dbReference type="Pfam" id="PF16198">
    <property type="entry name" value="TruB_C_2"/>
    <property type="match status" value="1"/>
</dbReference>
<dbReference type="Pfam" id="PF01509">
    <property type="entry name" value="TruB_N"/>
    <property type="match status" value="1"/>
</dbReference>
<dbReference type="SUPFAM" id="SSF55120">
    <property type="entry name" value="Pseudouridine synthase"/>
    <property type="match status" value="1"/>
</dbReference>
<gene>
    <name evidence="1" type="primary">truB</name>
    <name type="ordered locus">RHOS4_27250</name>
    <name type="ORF">RSP_1108</name>
</gene>
<feature type="chain" id="PRO_0000229377" description="tRNA pseudouridine synthase B">
    <location>
        <begin position="1"/>
        <end position="301"/>
    </location>
</feature>
<feature type="active site" description="Nucleophile" evidence="1">
    <location>
        <position position="47"/>
    </location>
</feature>
<protein>
    <recommendedName>
        <fullName evidence="1">tRNA pseudouridine synthase B</fullName>
        <ecNumber evidence="1">5.4.99.25</ecNumber>
    </recommendedName>
    <alternativeName>
        <fullName evidence="1">tRNA pseudouridine(55) synthase</fullName>
        <shortName evidence="1">Psi55 synthase</shortName>
    </alternativeName>
    <alternativeName>
        <fullName evidence="1">tRNA pseudouridylate synthase</fullName>
    </alternativeName>
    <alternativeName>
        <fullName evidence="1">tRNA-uridine isomerase</fullName>
    </alternativeName>
</protein>
<evidence type="ECO:0000255" key="1">
    <source>
        <dbReference type="HAMAP-Rule" id="MF_01080"/>
    </source>
</evidence>
<keyword id="KW-0413">Isomerase</keyword>
<keyword id="KW-1185">Reference proteome</keyword>
<keyword id="KW-0819">tRNA processing</keyword>
<accession>Q3IYU1</accession>
<name>TRUB_CERS4</name>
<reference key="1">
    <citation type="submission" date="2005-09" db="EMBL/GenBank/DDBJ databases">
        <title>Complete sequence of chromosome 1 of Rhodobacter sphaeroides 2.4.1.</title>
        <authorList>
            <person name="Copeland A."/>
            <person name="Lucas S."/>
            <person name="Lapidus A."/>
            <person name="Barry K."/>
            <person name="Detter J.C."/>
            <person name="Glavina T."/>
            <person name="Hammon N."/>
            <person name="Israni S."/>
            <person name="Pitluck S."/>
            <person name="Richardson P."/>
            <person name="Mackenzie C."/>
            <person name="Choudhary M."/>
            <person name="Larimer F."/>
            <person name="Hauser L.J."/>
            <person name="Land M."/>
            <person name="Donohue T.J."/>
            <person name="Kaplan S."/>
        </authorList>
    </citation>
    <scope>NUCLEOTIDE SEQUENCE [LARGE SCALE GENOMIC DNA]</scope>
    <source>
        <strain>ATCC 17023 / DSM 158 / JCM 6121 / CCUG 31486 / LMG 2827 / NBRC 12203 / NCIMB 8253 / ATH 2.4.1.</strain>
    </source>
</reference>